<accession>B9LB70</accession>
<proteinExistence type="inferred from homology"/>
<comment type="function">
    <text evidence="1">Digests double-stranded RNA. Involved in the processing of primary rRNA transcript to yield the immediate precursors to the large and small rRNAs (23S and 16S). Processes some mRNAs, and tRNAs when they are encoded in the rRNA operon. Processes pre-crRNA and tracrRNA of type II CRISPR loci if present in the organism.</text>
</comment>
<comment type="catalytic activity">
    <reaction evidence="1">
        <text>Endonucleolytic cleavage to 5'-phosphomonoester.</text>
        <dbReference type="EC" id="3.1.26.3"/>
    </reaction>
</comment>
<comment type="cofactor">
    <cofactor evidence="1">
        <name>Mg(2+)</name>
        <dbReference type="ChEBI" id="CHEBI:18420"/>
    </cofactor>
</comment>
<comment type="subunit">
    <text evidence="1">Homodimer.</text>
</comment>
<comment type="subcellular location">
    <subcellularLocation>
        <location evidence="1">Cytoplasm</location>
    </subcellularLocation>
</comment>
<comment type="similarity">
    <text evidence="1">Belongs to the ribonuclease III family.</text>
</comment>
<evidence type="ECO:0000255" key="1">
    <source>
        <dbReference type="HAMAP-Rule" id="MF_00104"/>
    </source>
</evidence>
<protein>
    <recommendedName>
        <fullName evidence="1">Ribonuclease 3</fullName>
        <ecNumber evidence="1">3.1.26.3</ecNumber>
    </recommendedName>
    <alternativeName>
        <fullName evidence="1">Ribonuclease III</fullName>
        <shortName evidence="1">RNase III</shortName>
    </alternativeName>
</protein>
<gene>
    <name evidence="1" type="primary">rnc</name>
    <name type="ordered locus">Chy400_1220</name>
</gene>
<reference key="1">
    <citation type="submission" date="2009-01" db="EMBL/GenBank/DDBJ databases">
        <title>Complete sequence of Chloroflexus sp. Y-400-fl.</title>
        <authorList>
            <consortium name="US DOE Joint Genome Institute"/>
            <person name="Lucas S."/>
            <person name="Copeland A."/>
            <person name="Lapidus A."/>
            <person name="Glavina del Rio T."/>
            <person name="Dalin E."/>
            <person name="Tice H."/>
            <person name="Bruce D."/>
            <person name="Goodwin L."/>
            <person name="Pitluck S."/>
            <person name="Sims D."/>
            <person name="Kiss H."/>
            <person name="Brettin T."/>
            <person name="Detter J.C."/>
            <person name="Han C."/>
            <person name="Larimer F."/>
            <person name="Land M."/>
            <person name="Hauser L."/>
            <person name="Kyrpides N."/>
            <person name="Ovchinnikova G."/>
            <person name="Bryant D.A."/>
            <person name="Richardson P."/>
        </authorList>
    </citation>
    <scope>NUCLEOTIDE SEQUENCE [LARGE SCALE GENOMIC DNA]</scope>
    <source>
        <strain>ATCC 29364 / DSM 637 / Y-400-fl</strain>
    </source>
</reference>
<organism>
    <name type="scientific">Chloroflexus aurantiacus (strain ATCC 29364 / DSM 637 / Y-400-fl)</name>
    <dbReference type="NCBI Taxonomy" id="480224"/>
    <lineage>
        <taxon>Bacteria</taxon>
        <taxon>Bacillati</taxon>
        <taxon>Chloroflexota</taxon>
        <taxon>Chloroflexia</taxon>
        <taxon>Chloroflexales</taxon>
        <taxon>Chloroflexineae</taxon>
        <taxon>Chloroflexaceae</taxon>
        <taxon>Chloroflexus</taxon>
    </lineage>
</organism>
<sequence length="244" mass="27729">MSDRLAELERAIGITFRDRTLLQTAFMHRSLFNEQPHLLNHLTDNERLEFLGDSVLHFVTTTWLFETFPDQDEATLTNWRAALVSTKGLAECAAQFNLGQYAYLSRGEDNPGGRSRQKLLADLFEALVGAIYLDQGLETARAFIVPFWQARIEQIIHIDLDPTTRLQELMQARFKQLPDYSIEEERGPEHQREYVMAVTVAGRKFTGSGSSKKEAKRAAARKALAAWDKHGFTATAIDAQDERN</sequence>
<dbReference type="EC" id="3.1.26.3" evidence="1"/>
<dbReference type="EMBL" id="CP001364">
    <property type="protein sequence ID" value="ACM52641.1"/>
    <property type="molecule type" value="Genomic_DNA"/>
</dbReference>
<dbReference type="SMR" id="B9LB70"/>
<dbReference type="KEGG" id="chl:Chy400_1220"/>
<dbReference type="HOGENOM" id="CLU_000907_1_3_0"/>
<dbReference type="OrthoDB" id="9805026at2"/>
<dbReference type="GO" id="GO:0005737">
    <property type="term" value="C:cytoplasm"/>
    <property type="evidence" value="ECO:0007669"/>
    <property type="project" value="UniProtKB-SubCell"/>
</dbReference>
<dbReference type="GO" id="GO:0003725">
    <property type="term" value="F:double-stranded RNA binding"/>
    <property type="evidence" value="ECO:0007669"/>
    <property type="project" value="TreeGrafter"/>
</dbReference>
<dbReference type="GO" id="GO:0046872">
    <property type="term" value="F:metal ion binding"/>
    <property type="evidence" value="ECO:0007669"/>
    <property type="project" value="UniProtKB-KW"/>
</dbReference>
<dbReference type="GO" id="GO:0004525">
    <property type="term" value="F:ribonuclease III activity"/>
    <property type="evidence" value="ECO:0007669"/>
    <property type="project" value="UniProtKB-UniRule"/>
</dbReference>
<dbReference type="GO" id="GO:0019843">
    <property type="term" value="F:rRNA binding"/>
    <property type="evidence" value="ECO:0007669"/>
    <property type="project" value="UniProtKB-KW"/>
</dbReference>
<dbReference type="GO" id="GO:0006397">
    <property type="term" value="P:mRNA processing"/>
    <property type="evidence" value="ECO:0007669"/>
    <property type="project" value="UniProtKB-UniRule"/>
</dbReference>
<dbReference type="GO" id="GO:0010468">
    <property type="term" value="P:regulation of gene expression"/>
    <property type="evidence" value="ECO:0007669"/>
    <property type="project" value="TreeGrafter"/>
</dbReference>
<dbReference type="GO" id="GO:0006364">
    <property type="term" value="P:rRNA processing"/>
    <property type="evidence" value="ECO:0007669"/>
    <property type="project" value="UniProtKB-UniRule"/>
</dbReference>
<dbReference type="GO" id="GO:0008033">
    <property type="term" value="P:tRNA processing"/>
    <property type="evidence" value="ECO:0007669"/>
    <property type="project" value="UniProtKB-KW"/>
</dbReference>
<dbReference type="CDD" id="cd10845">
    <property type="entry name" value="DSRM_RNAse_III_family"/>
    <property type="match status" value="1"/>
</dbReference>
<dbReference type="CDD" id="cd00593">
    <property type="entry name" value="RIBOc"/>
    <property type="match status" value="1"/>
</dbReference>
<dbReference type="FunFam" id="1.10.1520.10:FF:000001">
    <property type="entry name" value="Ribonuclease 3"/>
    <property type="match status" value="1"/>
</dbReference>
<dbReference type="FunFam" id="3.30.160.20:FF:000003">
    <property type="entry name" value="Ribonuclease 3"/>
    <property type="match status" value="1"/>
</dbReference>
<dbReference type="Gene3D" id="3.30.160.20">
    <property type="match status" value="1"/>
</dbReference>
<dbReference type="Gene3D" id="1.10.1520.10">
    <property type="entry name" value="Ribonuclease III domain"/>
    <property type="match status" value="1"/>
</dbReference>
<dbReference type="HAMAP" id="MF_00104">
    <property type="entry name" value="RNase_III"/>
    <property type="match status" value="1"/>
</dbReference>
<dbReference type="InterPro" id="IPR014720">
    <property type="entry name" value="dsRBD_dom"/>
</dbReference>
<dbReference type="InterPro" id="IPR011907">
    <property type="entry name" value="RNase_III"/>
</dbReference>
<dbReference type="InterPro" id="IPR000999">
    <property type="entry name" value="RNase_III_dom"/>
</dbReference>
<dbReference type="InterPro" id="IPR036389">
    <property type="entry name" value="RNase_III_sf"/>
</dbReference>
<dbReference type="NCBIfam" id="TIGR02191">
    <property type="entry name" value="RNaseIII"/>
    <property type="match status" value="1"/>
</dbReference>
<dbReference type="PANTHER" id="PTHR11207:SF0">
    <property type="entry name" value="RIBONUCLEASE 3"/>
    <property type="match status" value="1"/>
</dbReference>
<dbReference type="PANTHER" id="PTHR11207">
    <property type="entry name" value="RIBONUCLEASE III"/>
    <property type="match status" value="1"/>
</dbReference>
<dbReference type="Pfam" id="PF00035">
    <property type="entry name" value="dsrm"/>
    <property type="match status" value="1"/>
</dbReference>
<dbReference type="Pfam" id="PF14622">
    <property type="entry name" value="Ribonucleas_3_3"/>
    <property type="match status" value="1"/>
</dbReference>
<dbReference type="SMART" id="SM00358">
    <property type="entry name" value="DSRM"/>
    <property type="match status" value="1"/>
</dbReference>
<dbReference type="SMART" id="SM00535">
    <property type="entry name" value="RIBOc"/>
    <property type="match status" value="1"/>
</dbReference>
<dbReference type="SUPFAM" id="SSF54768">
    <property type="entry name" value="dsRNA-binding domain-like"/>
    <property type="match status" value="1"/>
</dbReference>
<dbReference type="SUPFAM" id="SSF69065">
    <property type="entry name" value="RNase III domain-like"/>
    <property type="match status" value="1"/>
</dbReference>
<dbReference type="PROSITE" id="PS50137">
    <property type="entry name" value="DS_RBD"/>
    <property type="match status" value="1"/>
</dbReference>
<dbReference type="PROSITE" id="PS00517">
    <property type="entry name" value="RNASE_3_1"/>
    <property type="match status" value="1"/>
</dbReference>
<dbReference type="PROSITE" id="PS50142">
    <property type="entry name" value="RNASE_3_2"/>
    <property type="match status" value="1"/>
</dbReference>
<keyword id="KW-0963">Cytoplasm</keyword>
<keyword id="KW-0255">Endonuclease</keyword>
<keyword id="KW-0378">Hydrolase</keyword>
<keyword id="KW-0460">Magnesium</keyword>
<keyword id="KW-0479">Metal-binding</keyword>
<keyword id="KW-0507">mRNA processing</keyword>
<keyword id="KW-0540">Nuclease</keyword>
<keyword id="KW-0694">RNA-binding</keyword>
<keyword id="KW-0698">rRNA processing</keyword>
<keyword id="KW-0699">rRNA-binding</keyword>
<keyword id="KW-0819">tRNA processing</keyword>
<feature type="chain" id="PRO_1000194418" description="Ribonuclease 3">
    <location>
        <begin position="1"/>
        <end position="244"/>
    </location>
</feature>
<feature type="domain" description="RNase III" evidence="1">
    <location>
        <begin position="5"/>
        <end position="136"/>
    </location>
</feature>
<feature type="domain" description="DRBM" evidence="1">
    <location>
        <begin position="161"/>
        <end position="229"/>
    </location>
</feature>
<feature type="active site" evidence="1">
    <location>
        <position position="53"/>
    </location>
</feature>
<feature type="active site" evidence="1">
    <location>
        <position position="125"/>
    </location>
</feature>
<feature type="binding site" evidence="1">
    <location>
        <position position="49"/>
    </location>
    <ligand>
        <name>Mg(2+)</name>
        <dbReference type="ChEBI" id="CHEBI:18420"/>
    </ligand>
</feature>
<feature type="binding site" evidence="1">
    <location>
        <position position="122"/>
    </location>
    <ligand>
        <name>Mg(2+)</name>
        <dbReference type="ChEBI" id="CHEBI:18420"/>
    </ligand>
</feature>
<feature type="binding site" evidence="1">
    <location>
        <position position="125"/>
    </location>
    <ligand>
        <name>Mg(2+)</name>
        <dbReference type="ChEBI" id="CHEBI:18420"/>
    </ligand>
</feature>
<name>RNC_CHLSY</name>